<sequence length="464" mass="52456">MALKIDFNNVFHPYLQKERLGEADIDGYKEKFTSALVSLREKKEKGELGFFHLPYLPEEEIAEIEKTAREVREKFKYFVVLGIGGSALGPLAVHTALNNLRYNELSEELRGGPKFYVEDNIDPERMASLLKVIEPEKTVFNVITKSGATAETLSQLLIVTEVLKKKVGKRFTEHLIFTTDPEKGSLRALARELGVKTFAIPPNVGGRFSELTPVGLLPAAVTGINIRELLAGAREMAERCERENLWENPAGLAAAIHVLLLERGKNMAVMMPYADSLKYMADWYAQLLGESIGKRLNRRGEEVFVGQTPVKALGVTDQHSQVQLYTEGPFDKLLIFLEVERYRNRVVIPPDFPQYAELKFLGGHTLNELIIAEKKATEFALLKARRPNYTVIFPEVNPYTVGELLYFLEAKIAFMGEYLDINAFDQPGVEEGKKATYALLGREGFEEKRQEVLKVKKEPRFILE</sequence>
<proteinExistence type="inferred from homology"/>
<protein>
    <recommendedName>
        <fullName evidence="1">Glucose-6-phosphate isomerase</fullName>
        <shortName evidence="1">GPI</shortName>
        <ecNumber evidence="1">5.3.1.9</ecNumber>
    </recommendedName>
    <alternativeName>
        <fullName evidence="1">Phosphoglucose isomerase</fullName>
        <shortName evidence="1">PGI</shortName>
    </alternativeName>
    <alternativeName>
        <fullName evidence="1">Phosphohexose isomerase</fullName>
        <shortName evidence="1">PHI</shortName>
    </alternativeName>
</protein>
<dbReference type="EC" id="5.3.1.9" evidence="1"/>
<dbReference type="EMBL" id="CP000141">
    <property type="protein sequence ID" value="ABB14260.1"/>
    <property type="molecule type" value="Genomic_DNA"/>
</dbReference>
<dbReference type="RefSeq" id="WP_011343187.1">
    <property type="nucleotide sequence ID" value="NC_007503.1"/>
</dbReference>
<dbReference type="SMR" id="Q3AFH3"/>
<dbReference type="FunCoup" id="Q3AFH3">
    <property type="interactions" value="373"/>
</dbReference>
<dbReference type="STRING" id="246194.CHY_0239"/>
<dbReference type="KEGG" id="chy:CHY_0239"/>
<dbReference type="eggNOG" id="COG0166">
    <property type="taxonomic scope" value="Bacteria"/>
</dbReference>
<dbReference type="HOGENOM" id="CLU_037303_1_0_9"/>
<dbReference type="InParanoid" id="Q3AFH3"/>
<dbReference type="OrthoDB" id="140919at2"/>
<dbReference type="UniPathway" id="UPA00109">
    <property type="reaction ID" value="UER00181"/>
</dbReference>
<dbReference type="UniPathway" id="UPA00138"/>
<dbReference type="Proteomes" id="UP000002706">
    <property type="component" value="Chromosome"/>
</dbReference>
<dbReference type="GO" id="GO:0005829">
    <property type="term" value="C:cytosol"/>
    <property type="evidence" value="ECO:0007669"/>
    <property type="project" value="TreeGrafter"/>
</dbReference>
<dbReference type="GO" id="GO:0097367">
    <property type="term" value="F:carbohydrate derivative binding"/>
    <property type="evidence" value="ECO:0007669"/>
    <property type="project" value="InterPro"/>
</dbReference>
<dbReference type="GO" id="GO:0004347">
    <property type="term" value="F:glucose-6-phosphate isomerase activity"/>
    <property type="evidence" value="ECO:0007669"/>
    <property type="project" value="UniProtKB-UniRule"/>
</dbReference>
<dbReference type="GO" id="GO:0048029">
    <property type="term" value="F:monosaccharide binding"/>
    <property type="evidence" value="ECO:0007669"/>
    <property type="project" value="TreeGrafter"/>
</dbReference>
<dbReference type="GO" id="GO:0006094">
    <property type="term" value="P:gluconeogenesis"/>
    <property type="evidence" value="ECO:0007669"/>
    <property type="project" value="UniProtKB-UniRule"/>
</dbReference>
<dbReference type="GO" id="GO:0051156">
    <property type="term" value="P:glucose 6-phosphate metabolic process"/>
    <property type="evidence" value="ECO:0007669"/>
    <property type="project" value="TreeGrafter"/>
</dbReference>
<dbReference type="GO" id="GO:0006096">
    <property type="term" value="P:glycolytic process"/>
    <property type="evidence" value="ECO:0007669"/>
    <property type="project" value="UniProtKB-UniRule"/>
</dbReference>
<dbReference type="CDD" id="cd05015">
    <property type="entry name" value="SIS_PGI_1"/>
    <property type="match status" value="1"/>
</dbReference>
<dbReference type="CDD" id="cd05016">
    <property type="entry name" value="SIS_PGI_2"/>
    <property type="match status" value="1"/>
</dbReference>
<dbReference type="FunFam" id="3.40.50.10490:FF:000016">
    <property type="entry name" value="Glucose-6-phosphate isomerase"/>
    <property type="match status" value="1"/>
</dbReference>
<dbReference type="FunFam" id="3.40.50.10490:FF:000071">
    <property type="entry name" value="Glucose-6-phosphate isomerase"/>
    <property type="match status" value="1"/>
</dbReference>
<dbReference type="Gene3D" id="3.40.50.10490">
    <property type="entry name" value="Glucose-6-phosphate isomerase like protein, domain 1"/>
    <property type="match status" value="2"/>
</dbReference>
<dbReference type="HAMAP" id="MF_00473">
    <property type="entry name" value="G6P_isomerase"/>
    <property type="match status" value="1"/>
</dbReference>
<dbReference type="InterPro" id="IPR001672">
    <property type="entry name" value="G6P_Isomerase"/>
</dbReference>
<dbReference type="InterPro" id="IPR018189">
    <property type="entry name" value="Phosphoglucose_isomerase_CS"/>
</dbReference>
<dbReference type="InterPro" id="IPR046348">
    <property type="entry name" value="SIS_dom_sf"/>
</dbReference>
<dbReference type="InterPro" id="IPR035476">
    <property type="entry name" value="SIS_PGI_1"/>
</dbReference>
<dbReference type="InterPro" id="IPR035482">
    <property type="entry name" value="SIS_PGI_2"/>
</dbReference>
<dbReference type="PANTHER" id="PTHR11469">
    <property type="entry name" value="GLUCOSE-6-PHOSPHATE ISOMERASE"/>
    <property type="match status" value="1"/>
</dbReference>
<dbReference type="PANTHER" id="PTHR11469:SF1">
    <property type="entry name" value="GLUCOSE-6-PHOSPHATE ISOMERASE"/>
    <property type="match status" value="1"/>
</dbReference>
<dbReference type="Pfam" id="PF00342">
    <property type="entry name" value="PGI"/>
    <property type="match status" value="1"/>
</dbReference>
<dbReference type="PRINTS" id="PR00662">
    <property type="entry name" value="G6PISOMERASE"/>
</dbReference>
<dbReference type="SUPFAM" id="SSF53697">
    <property type="entry name" value="SIS domain"/>
    <property type="match status" value="1"/>
</dbReference>
<dbReference type="PROSITE" id="PS00174">
    <property type="entry name" value="P_GLUCOSE_ISOMERASE_2"/>
    <property type="match status" value="1"/>
</dbReference>
<dbReference type="PROSITE" id="PS51463">
    <property type="entry name" value="P_GLUCOSE_ISOMERASE_3"/>
    <property type="match status" value="1"/>
</dbReference>
<name>G6PI_CARHZ</name>
<evidence type="ECO:0000255" key="1">
    <source>
        <dbReference type="HAMAP-Rule" id="MF_00473"/>
    </source>
</evidence>
<accession>Q3AFH3</accession>
<keyword id="KW-0963">Cytoplasm</keyword>
<keyword id="KW-0312">Gluconeogenesis</keyword>
<keyword id="KW-0324">Glycolysis</keyword>
<keyword id="KW-0413">Isomerase</keyword>
<keyword id="KW-1185">Reference proteome</keyword>
<gene>
    <name evidence="1" type="primary">pgi</name>
    <name type="ordered locus">CHY_0239</name>
</gene>
<feature type="chain" id="PRO_0000230915" description="Glucose-6-phosphate isomerase">
    <location>
        <begin position="1"/>
        <end position="464"/>
    </location>
</feature>
<feature type="active site" description="Proton donor" evidence="1">
    <location>
        <position position="290"/>
    </location>
</feature>
<feature type="active site" evidence="1">
    <location>
        <position position="319"/>
    </location>
</feature>
<feature type="active site" evidence="1">
    <location>
        <position position="433"/>
    </location>
</feature>
<organism>
    <name type="scientific">Carboxydothermus hydrogenoformans (strain ATCC BAA-161 / DSM 6008 / Z-2901)</name>
    <dbReference type="NCBI Taxonomy" id="246194"/>
    <lineage>
        <taxon>Bacteria</taxon>
        <taxon>Bacillati</taxon>
        <taxon>Bacillota</taxon>
        <taxon>Clostridia</taxon>
        <taxon>Thermoanaerobacterales</taxon>
        <taxon>Thermoanaerobacteraceae</taxon>
        <taxon>Carboxydothermus</taxon>
    </lineage>
</organism>
<comment type="function">
    <text evidence="1">Catalyzes the reversible isomerization of glucose-6-phosphate to fructose-6-phosphate.</text>
</comment>
<comment type="catalytic activity">
    <reaction evidence="1">
        <text>alpha-D-glucose 6-phosphate = beta-D-fructose 6-phosphate</text>
        <dbReference type="Rhea" id="RHEA:11816"/>
        <dbReference type="ChEBI" id="CHEBI:57634"/>
        <dbReference type="ChEBI" id="CHEBI:58225"/>
        <dbReference type="EC" id="5.3.1.9"/>
    </reaction>
</comment>
<comment type="pathway">
    <text evidence="1">Carbohydrate biosynthesis; gluconeogenesis.</text>
</comment>
<comment type="pathway">
    <text evidence="1">Carbohydrate degradation; glycolysis; D-glyceraldehyde 3-phosphate and glycerone phosphate from D-glucose: step 2/4.</text>
</comment>
<comment type="subcellular location">
    <subcellularLocation>
        <location evidence="1">Cytoplasm</location>
    </subcellularLocation>
</comment>
<comment type="similarity">
    <text evidence="1">Belongs to the GPI family.</text>
</comment>
<reference key="1">
    <citation type="journal article" date="2005" name="PLoS Genet.">
        <title>Life in hot carbon monoxide: the complete genome sequence of Carboxydothermus hydrogenoformans Z-2901.</title>
        <authorList>
            <person name="Wu M."/>
            <person name="Ren Q."/>
            <person name="Durkin A.S."/>
            <person name="Daugherty S.C."/>
            <person name="Brinkac L.M."/>
            <person name="Dodson R.J."/>
            <person name="Madupu R."/>
            <person name="Sullivan S.A."/>
            <person name="Kolonay J.F."/>
            <person name="Nelson W.C."/>
            <person name="Tallon L.J."/>
            <person name="Jones K.M."/>
            <person name="Ulrich L.E."/>
            <person name="Gonzalez J.M."/>
            <person name="Zhulin I.B."/>
            <person name="Robb F.T."/>
            <person name="Eisen J.A."/>
        </authorList>
    </citation>
    <scope>NUCLEOTIDE SEQUENCE [LARGE SCALE GENOMIC DNA]</scope>
    <source>
        <strain>ATCC BAA-161 / DSM 6008 / Z-2901</strain>
    </source>
</reference>